<keyword id="KW-0963">Cytoplasm</keyword>
<keyword id="KW-0472">Membrane</keyword>
<keyword id="KW-0479">Metal-binding</keyword>
<keyword id="KW-0539">Nucleus</keyword>
<keyword id="KW-1185">Reference proteome</keyword>
<keyword id="KW-0832">Ubl conjugation</keyword>
<keyword id="KW-0833">Ubl conjugation pathway</keyword>
<keyword id="KW-0862">Zinc</keyword>
<evidence type="ECO:0000250" key="1"/>
<evidence type="ECO:0000250" key="2">
    <source>
        <dbReference type="UniProtKB" id="Q56AP7"/>
    </source>
</evidence>
<evidence type="ECO:0000250" key="3">
    <source>
        <dbReference type="UniProtKB" id="Q8C7D2"/>
    </source>
</evidence>
<evidence type="ECO:0000250" key="4">
    <source>
        <dbReference type="UniProtKB" id="Q96SW2"/>
    </source>
</evidence>
<evidence type="ECO:0000255" key="5">
    <source>
        <dbReference type="PROSITE-ProRule" id="PRU01123"/>
    </source>
</evidence>
<evidence type="ECO:0000255" key="6">
    <source>
        <dbReference type="PROSITE-ProRule" id="PRU01124"/>
    </source>
</evidence>
<evidence type="ECO:0000256" key="7">
    <source>
        <dbReference type="SAM" id="MobiDB-lite"/>
    </source>
</evidence>
<evidence type="ECO:0000305" key="8"/>
<dbReference type="EMBL" id="BC120452">
    <property type="protein sequence ID" value="AAI20453.1"/>
    <property type="molecule type" value="mRNA"/>
</dbReference>
<dbReference type="RefSeq" id="NP_001068995.1">
    <property type="nucleotide sequence ID" value="NM_001075527.1"/>
</dbReference>
<dbReference type="SMR" id="Q0P564"/>
<dbReference type="FunCoup" id="Q0P564">
    <property type="interactions" value="4776"/>
</dbReference>
<dbReference type="IntAct" id="Q0P564">
    <property type="interactions" value="1"/>
</dbReference>
<dbReference type="MINT" id="Q0P564"/>
<dbReference type="STRING" id="9913.ENSBTAP00000026031"/>
<dbReference type="PaxDb" id="9913-ENSBTAP00000026031"/>
<dbReference type="Ensembl" id="ENSBTAT00000026031.7">
    <property type="protein sequence ID" value="ENSBTAP00000026031.5"/>
    <property type="gene ID" value="ENSBTAG00000019536.7"/>
</dbReference>
<dbReference type="GeneID" id="511585"/>
<dbReference type="KEGG" id="bta:511585"/>
<dbReference type="CTD" id="51185"/>
<dbReference type="VEuPathDB" id="HostDB:ENSBTAG00000019536"/>
<dbReference type="VGNC" id="VGNC:27690">
    <property type="gene designation" value="CRBN"/>
</dbReference>
<dbReference type="eggNOG" id="KOG1400">
    <property type="taxonomic scope" value="Eukaryota"/>
</dbReference>
<dbReference type="GeneTree" id="ENSGT00390000016404"/>
<dbReference type="HOGENOM" id="CLU_025648_1_1_1"/>
<dbReference type="InParanoid" id="Q0P564"/>
<dbReference type="OMA" id="SPQYIAR"/>
<dbReference type="OrthoDB" id="267517at2759"/>
<dbReference type="TreeFam" id="TF106115"/>
<dbReference type="UniPathway" id="UPA00143"/>
<dbReference type="Proteomes" id="UP000009136">
    <property type="component" value="Chromosome 22"/>
</dbReference>
<dbReference type="Bgee" id="ENSBTAG00000019536">
    <property type="expression patterns" value="Expressed in semitendinosus and 107 other cell types or tissues"/>
</dbReference>
<dbReference type="GO" id="GO:0031464">
    <property type="term" value="C:Cul4A-RING E3 ubiquitin ligase complex"/>
    <property type="evidence" value="ECO:0000250"/>
    <property type="project" value="UniProtKB"/>
</dbReference>
<dbReference type="GO" id="GO:0005737">
    <property type="term" value="C:cytoplasm"/>
    <property type="evidence" value="ECO:0000250"/>
    <property type="project" value="UniProtKB"/>
</dbReference>
<dbReference type="GO" id="GO:0016020">
    <property type="term" value="C:membrane"/>
    <property type="evidence" value="ECO:0007669"/>
    <property type="project" value="UniProtKB-SubCell"/>
</dbReference>
<dbReference type="GO" id="GO:0005634">
    <property type="term" value="C:nucleus"/>
    <property type="evidence" value="ECO:0000250"/>
    <property type="project" value="UniProtKB"/>
</dbReference>
<dbReference type="GO" id="GO:0046872">
    <property type="term" value="F:metal ion binding"/>
    <property type="evidence" value="ECO:0007669"/>
    <property type="project" value="UniProtKB-KW"/>
</dbReference>
<dbReference type="GO" id="GO:0035641">
    <property type="term" value="P:locomotory exploration behavior"/>
    <property type="evidence" value="ECO:0007669"/>
    <property type="project" value="Ensembl"/>
</dbReference>
<dbReference type="GO" id="GO:0030177">
    <property type="term" value="P:positive regulation of Wnt signaling pathway"/>
    <property type="evidence" value="ECO:0007669"/>
    <property type="project" value="Ensembl"/>
</dbReference>
<dbReference type="GO" id="GO:0043161">
    <property type="term" value="P:proteasome-mediated ubiquitin-dependent protein catabolic process"/>
    <property type="evidence" value="ECO:0000250"/>
    <property type="project" value="UniProtKB"/>
</dbReference>
<dbReference type="GO" id="GO:0016567">
    <property type="term" value="P:protein ubiquitination"/>
    <property type="evidence" value="ECO:0000250"/>
    <property type="project" value="UniProtKB"/>
</dbReference>
<dbReference type="CDD" id="cd15777">
    <property type="entry name" value="CRBN_C_like"/>
    <property type="match status" value="1"/>
</dbReference>
<dbReference type="FunFam" id="1.20.58.1480:FF:000004">
    <property type="entry name" value="Cereblon, isoform CRA_c"/>
    <property type="match status" value="1"/>
</dbReference>
<dbReference type="FunFam" id="2.30.130.40:FF:000002">
    <property type="entry name" value="Cereblon, isoform CRA_c"/>
    <property type="match status" value="1"/>
</dbReference>
<dbReference type="FunFam" id="2.170.150.20:FF:000007">
    <property type="entry name" value="Protein cereblon"/>
    <property type="match status" value="1"/>
</dbReference>
<dbReference type="Gene3D" id="1.20.58.1480">
    <property type="match status" value="1"/>
</dbReference>
<dbReference type="Gene3D" id="2.30.130.40">
    <property type="entry name" value="LON domain-like"/>
    <property type="match status" value="1"/>
</dbReference>
<dbReference type="Gene3D" id="2.170.150.20">
    <property type="entry name" value="Peptide methionine sulfoxide reductase"/>
    <property type="match status" value="1"/>
</dbReference>
<dbReference type="InterPro" id="IPR034750">
    <property type="entry name" value="CULT"/>
</dbReference>
<dbReference type="InterPro" id="IPR003111">
    <property type="entry name" value="Lon_prtase_N"/>
</dbReference>
<dbReference type="InterPro" id="IPR046336">
    <property type="entry name" value="Lon_prtase_N_sf"/>
</dbReference>
<dbReference type="InterPro" id="IPR015947">
    <property type="entry name" value="PUA-like_sf"/>
</dbReference>
<dbReference type="InterPro" id="IPR004910">
    <property type="entry name" value="Yippee/Mis18/Cereblon"/>
</dbReference>
<dbReference type="PANTHER" id="PTHR14255">
    <property type="entry name" value="CEREBLON"/>
    <property type="match status" value="1"/>
</dbReference>
<dbReference type="PANTHER" id="PTHR14255:SF4">
    <property type="entry name" value="PROTEIN CEREBLON"/>
    <property type="match status" value="1"/>
</dbReference>
<dbReference type="Pfam" id="PF02190">
    <property type="entry name" value="LON_substr_bdg"/>
    <property type="match status" value="1"/>
</dbReference>
<dbReference type="Pfam" id="PF03226">
    <property type="entry name" value="Yippee-Mis18"/>
    <property type="match status" value="1"/>
</dbReference>
<dbReference type="SMART" id="SM00464">
    <property type="entry name" value="LON"/>
    <property type="match status" value="1"/>
</dbReference>
<dbReference type="SUPFAM" id="SSF88697">
    <property type="entry name" value="PUA domain-like"/>
    <property type="match status" value="1"/>
</dbReference>
<dbReference type="PROSITE" id="PS51788">
    <property type="entry name" value="CULT"/>
    <property type="match status" value="1"/>
</dbReference>
<dbReference type="PROSITE" id="PS51787">
    <property type="entry name" value="LON_N"/>
    <property type="match status" value="1"/>
</dbReference>
<feature type="chain" id="PRO_0000393875" description="Protein cereblon">
    <location>
        <begin position="1"/>
        <end position="444"/>
    </location>
</feature>
<feature type="domain" description="Lon N-terminal" evidence="5">
    <location>
        <begin position="80"/>
        <end position="321"/>
    </location>
</feature>
<feature type="domain" description="CULT" evidence="6">
    <location>
        <begin position="320"/>
        <end position="428"/>
    </location>
</feature>
<feature type="region of interest" description="Disordered" evidence="7">
    <location>
        <begin position="1"/>
        <end position="52"/>
    </location>
</feature>
<feature type="compositionally biased region" description="Acidic residues" evidence="7">
    <location>
        <begin position="23"/>
        <end position="37"/>
    </location>
</feature>
<feature type="binding site" evidence="4">
    <location>
        <position position="325"/>
    </location>
    <ligand>
        <name>Zn(2+)</name>
        <dbReference type="ChEBI" id="CHEBI:29105"/>
    </ligand>
</feature>
<feature type="binding site" evidence="4">
    <location>
        <position position="328"/>
    </location>
    <ligand>
        <name>Zn(2+)</name>
        <dbReference type="ChEBI" id="CHEBI:29105"/>
    </ligand>
</feature>
<feature type="binding site" evidence="4">
    <location>
        <position position="380"/>
    </location>
    <ligand>
        <name>(S)-thalidomide</name>
        <dbReference type="ChEBI" id="CHEBI:61918"/>
    </ligand>
</feature>
<feature type="binding site" evidence="4">
    <location>
        <position position="382"/>
    </location>
    <ligand>
        <name>(S)-thalidomide</name>
        <dbReference type="ChEBI" id="CHEBI:61918"/>
    </ligand>
</feature>
<feature type="binding site" evidence="4">
    <location>
        <position position="388"/>
    </location>
    <ligand>
        <name>(S)-thalidomide</name>
        <dbReference type="ChEBI" id="CHEBI:61918"/>
    </ligand>
</feature>
<feature type="binding site" evidence="4">
    <location>
        <position position="393"/>
    </location>
    <ligand>
        <name>Zn(2+)</name>
        <dbReference type="ChEBI" id="CHEBI:29105"/>
    </ligand>
</feature>
<feature type="binding site" evidence="4">
    <location>
        <position position="396"/>
    </location>
    <ligand>
        <name>Zn(2+)</name>
        <dbReference type="ChEBI" id="CHEBI:29105"/>
    </ligand>
</feature>
<organism>
    <name type="scientific">Bos taurus</name>
    <name type="common">Bovine</name>
    <dbReference type="NCBI Taxonomy" id="9913"/>
    <lineage>
        <taxon>Eukaryota</taxon>
        <taxon>Metazoa</taxon>
        <taxon>Chordata</taxon>
        <taxon>Craniata</taxon>
        <taxon>Vertebrata</taxon>
        <taxon>Euteleostomi</taxon>
        <taxon>Mammalia</taxon>
        <taxon>Eutheria</taxon>
        <taxon>Laurasiatheria</taxon>
        <taxon>Artiodactyla</taxon>
        <taxon>Ruminantia</taxon>
        <taxon>Pecora</taxon>
        <taxon>Bovidae</taxon>
        <taxon>Bovinae</taxon>
        <taxon>Bos</taxon>
    </lineage>
</organism>
<proteinExistence type="evidence at transcript level"/>
<protein>
    <recommendedName>
        <fullName>Protein cereblon</fullName>
    </recommendedName>
</protein>
<reference key="1">
    <citation type="submission" date="2006-08" db="EMBL/GenBank/DDBJ databases">
        <authorList>
            <consortium name="NIH - Mammalian Gene Collection (MGC) project"/>
        </authorList>
    </citation>
    <scope>NUCLEOTIDE SEQUENCE [LARGE SCALE MRNA]</scope>
    <source>
        <strain>Hereford</strain>
        <tissue>Hippocampus</tissue>
    </source>
</reference>
<name>CRBN_BOVIN</name>
<accession>Q0P564</accession>
<gene>
    <name type="primary">CRBN</name>
</gene>
<sequence>MAGEGDPEDAAHNMGNHLPLLPAEEEEEDEIEMEVEDQDNKEPKKPNIINFDTSLPTSHTYLGSDMEEFHGRTLHDDDSCPVIPVLPQVVMTLIPGQTLPLQLFSPQEVSMVRNLIQKDRTFAVLAYSNVQEREAQFGTTAEIYAYREEQDFGIEVVKVKAIGRQRFKVLEIRTQSDGIQQAKVQILPECVLPSTMSAVQLESLNKCRIFPSKPVSWEDQCSYKWWQKYQKRKFHCANLTSWPRWLYSLYDAETLMDRIKKQLREWDENLKEDSLPSNPIDFSYRVAACLPIDDVLRIQLLKIGSAIQRLRCELDIMNKCTSLCCKQCQETEITTKNEIFSLSLCGPMAAYVNPHGYVHETLTVYKASNLNLIGRPSTDHSWFPGYAWTIAQCRICASHIGWKFTATKKDMSPQKFWGLTRSALLPTIPDTEDDISPDKVILCL</sequence>
<comment type="function">
    <text evidence="3 4 8">Substrate recognition component of a DCX (DDB1-CUL4-X-box) E3 protein ligase complex that mediates the ubiquitination and subsequent proteasomal degradation of target proteins, such as MEIS2, ILF2 or GLUL. Normal degradation of key regulatory proteins is required for normal limb outgrowth and expression of the fibroblast growth factor FGF8. Maintains presynaptic glutamate release and consequently cognitive functions, such as memory and learning, by negatively regulating large-conductance calcium-activated potassium (BK) channels in excitatory neurons. Likely to function by regulating the assembly and neuronal surface expression of BK channels via its interaction with KCNT1 (By similarity). May also be involved in regulating anxiety-like behaviors via a BK channel-independent mechanism (By similarity). Plays a negative role in TLR4 signaling by interacting with TRAF6 and ECSIT, leading to inhibition of ECSIT ubiquitination, an important step of the signaling (By similarity).</text>
</comment>
<comment type="pathway">
    <text evidence="4">Protein modification; protein ubiquitination.</text>
</comment>
<comment type="subunit">
    <text evidence="2 4">Component of a DCX (DDB1-CUL4-X-box) protein ligase complex, at least composed of CRBN, CUL4A, DDB1 and RBX1. Interacts directly with DDB1 (By similarity). Interacts with KCNT1 (By similarity). Interacts with ILF2 (By similarity). Interacts with TRAF6 and ECSIT (By similarity).</text>
</comment>
<comment type="subcellular location">
    <subcellularLocation>
        <location evidence="4">Cytoplasm</location>
    </subcellularLocation>
    <subcellularLocation>
        <location evidence="4">Nucleus</location>
    </subcellularLocation>
    <subcellularLocation>
        <location evidence="1">Membrane</location>
        <topology evidence="1">Peripheral membrane protein</topology>
    </subcellularLocation>
</comment>
<comment type="PTM">
    <text evidence="4">Ubiquitinated, ubiquitination is mediated by its own DCX protein ligase complex.</text>
</comment>
<comment type="similarity">
    <text evidence="8">Belongs to the CRBN family.</text>
</comment>